<feature type="chain" id="PRO_0000179758" description="ATP-dependent Clp protease proteolytic subunit">
    <location>
        <begin position="1"/>
        <end position="216"/>
    </location>
</feature>
<feature type="active site" description="Nucleophile" evidence="1">
    <location>
        <position position="101"/>
    </location>
</feature>
<feature type="active site" evidence="1">
    <location>
        <position position="126"/>
    </location>
</feature>
<keyword id="KW-0150">Chloroplast</keyword>
<keyword id="KW-0378">Hydrolase</keyword>
<keyword id="KW-0934">Plastid</keyword>
<keyword id="KW-0645">Protease</keyword>
<keyword id="KW-0720">Serine protease</keyword>
<geneLocation type="chloroplast"/>
<name>CLPP_SACOF</name>
<dbReference type="EC" id="3.4.21.92" evidence="1"/>
<dbReference type="EMBL" id="AP006714">
    <property type="protein sequence ID" value="BAD27317.1"/>
    <property type="molecule type" value="Genomic_DNA"/>
</dbReference>
<dbReference type="RefSeq" id="YP_009389595.1">
    <property type="nucleotide sequence ID" value="NC_035224.1"/>
</dbReference>
<dbReference type="SMR" id="Q6ENT9"/>
<dbReference type="MEROPS" id="S14.002"/>
<dbReference type="GeneID" id="33347843"/>
<dbReference type="GO" id="GO:0009570">
    <property type="term" value="C:chloroplast stroma"/>
    <property type="evidence" value="ECO:0007669"/>
    <property type="project" value="UniProtKB-SubCell"/>
</dbReference>
<dbReference type="GO" id="GO:0004176">
    <property type="term" value="F:ATP-dependent peptidase activity"/>
    <property type="evidence" value="ECO:0007669"/>
    <property type="project" value="InterPro"/>
</dbReference>
<dbReference type="GO" id="GO:0004252">
    <property type="term" value="F:serine-type endopeptidase activity"/>
    <property type="evidence" value="ECO:0007669"/>
    <property type="project" value="UniProtKB-UniRule"/>
</dbReference>
<dbReference type="GO" id="GO:0006508">
    <property type="term" value="P:proteolysis"/>
    <property type="evidence" value="ECO:0007669"/>
    <property type="project" value="UniProtKB-UniRule"/>
</dbReference>
<dbReference type="CDD" id="cd07017">
    <property type="entry name" value="S14_ClpP_2"/>
    <property type="match status" value="1"/>
</dbReference>
<dbReference type="FunFam" id="3.90.226.10:FF:000006">
    <property type="entry name" value="ATP-dependent Clp protease proteolytic subunit"/>
    <property type="match status" value="1"/>
</dbReference>
<dbReference type="Gene3D" id="3.90.226.10">
    <property type="entry name" value="2-enoyl-CoA Hydratase, Chain A, domain 1"/>
    <property type="match status" value="1"/>
</dbReference>
<dbReference type="HAMAP" id="MF_00444">
    <property type="entry name" value="ClpP"/>
    <property type="match status" value="1"/>
</dbReference>
<dbReference type="InterPro" id="IPR001907">
    <property type="entry name" value="ClpP"/>
</dbReference>
<dbReference type="InterPro" id="IPR029045">
    <property type="entry name" value="ClpP/crotonase-like_dom_sf"/>
</dbReference>
<dbReference type="InterPro" id="IPR023562">
    <property type="entry name" value="ClpP/TepA"/>
</dbReference>
<dbReference type="InterPro" id="IPR033135">
    <property type="entry name" value="ClpP_His_AS"/>
</dbReference>
<dbReference type="InterPro" id="IPR018215">
    <property type="entry name" value="ClpP_Ser_AS"/>
</dbReference>
<dbReference type="PANTHER" id="PTHR48481">
    <property type="entry name" value="ATP-DEPENDENT CLP PROTEASE PROTEOLYTIC SUBUNIT"/>
    <property type="match status" value="1"/>
</dbReference>
<dbReference type="PANTHER" id="PTHR48481:SF1">
    <property type="entry name" value="ATP-DEPENDENT CLP PROTEASE PROTEOLYTIC SUBUNIT"/>
    <property type="match status" value="1"/>
</dbReference>
<dbReference type="Pfam" id="PF00574">
    <property type="entry name" value="CLP_protease"/>
    <property type="match status" value="1"/>
</dbReference>
<dbReference type="PRINTS" id="PR00127">
    <property type="entry name" value="CLPPROTEASEP"/>
</dbReference>
<dbReference type="SUPFAM" id="SSF52096">
    <property type="entry name" value="ClpP/crotonase"/>
    <property type="match status" value="1"/>
</dbReference>
<dbReference type="PROSITE" id="PS00382">
    <property type="entry name" value="CLP_PROTEASE_HIS"/>
    <property type="match status" value="1"/>
</dbReference>
<dbReference type="PROSITE" id="PS00381">
    <property type="entry name" value="CLP_PROTEASE_SER"/>
    <property type="match status" value="1"/>
</dbReference>
<sequence>MPIGVPKVPYRIPGDEEATWVDLYNVMYRERTLFLGQEIRCEITNHITGLMVYLSIEDGNSDIFLFINSPGGWLISGMAIFDTMQTVTPDIYTICLGIAASMASFILLGGEPTKRIAFPHARIMLHQPASAYYRARTPEFLLEVEELHKVREMITRVYALRTGKPFWVVSEDMERDVFMSADEAKAYGLVDIVGDEMIDEHCDTDPVWFPEMFKDW</sequence>
<protein>
    <recommendedName>
        <fullName evidence="1">ATP-dependent Clp protease proteolytic subunit</fullName>
        <ecNumber evidence="1">3.4.21.92</ecNumber>
    </recommendedName>
    <alternativeName>
        <fullName evidence="1">Endopeptidase Clp</fullName>
    </alternativeName>
</protein>
<gene>
    <name evidence="1" type="primary">clpP</name>
</gene>
<organism>
    <name type="scientific">Saccharum officinarum</name>
    <name type="common">Sugarcane</name>
    <dbReference type="NCBI Taxonomy" id="4547"/>
    <lineage>
        <taxon>Eukaryota</taxon>
        <taxon>Viridiplantae</taxon>
        <taxon>Streptophyta</taxon>
        <taxon>Embryophyta</taxon>
        <taxon>Tracheophyta</taxon>
        <taxon>Spermatophyta</taxon>
        <taxon>Magnoliopsida</taxon>
        <taxon>Liliopsida</taxon>
        <taxon>Poales</taxon>
        <taxon>Poaceae</taxon>
        <taxon>PACMAD clade</taxon>
        <taxon>Panicoideae</taxon>
        <taxon>Andropogonodae</taxon>
        <taxon>Andropogoneae</taxon>
        <taxon>Saccharinae</taxon>
        <taxon>Saccharum</taxon>
        <taxon>Saccharum officinarum species complex</taxon>
    </lineage>
</organism>
<comment type="function">
    <text evidence="1">Cleaves peptides in various proteins in a process that requires ATP hydrolysis. Has a chymotrypsin-like activity. Plays a major role in the degradation of misfolded proteins.</text>
</comment>
<comment type="catalytic activity">
    <reaction evidence="1">
        <text>Hydrolysis of proteins to small peptides in the presence of ATP and magnesium. alpha-casein is the usual test substrate. In the absence of ATP, only oligopeptides shorter than five residues are hydrolyzed (such as succinyl-Leu-Tyr-|-NHMec, and Leu-Tyr-Leu-|-Tyr-Trp, in which cleavage of the -Tyr-|-Leu- and -Tyr-|-Trp bonds also occurs).</text>
        <dbReference type="EC" id="3.4.21.92"/>
    </reaction>
</comment>
<comment type="subunit">
    <text>Component of the chloroplastic Clp protease core complex.</text>
</comment>
<comment type="subcellular location">
    <subcellularLocation>
        <location evidence="1">Plastid</location>
        <location evidence="1">Chloroplast stroma</location>
    </subcellularLocation>
</comment>
<comment type="similarity">
    <text evidence="1">Belongs to the peptidase S14 family.</text>
</comment>
<proteinExistence type="inferred from homology"/>
<evidence type="ECO:0000255" key="1">
    <source>
        <dbReference type="HAMAP-Rule" id="MF_00444"/>
    </source>
</evidence>
<reference key="1">
    <citation type="journal article" date="2004" name="DNA Res.">
        <title>Complete nucleotide sequence of the sugarcane (Saccharum officinarum) chloroplast genome: a comparative analysis of four monocot chloroplast genomes.</title>
        <authorList>
            <person name="Asano T."/>
            <person name="Tsudzuki T."/>
            <person name="Takahashi S."/>
            <person name="Shimada H."/>
            <person name="Kadowaki K."/>
        </authorList>
    </citation>
    <scope>NUCLEOTIDE SEQUENCE [LARGE SCALE GENOMIC DNA]</scope>
</reference>
<accession>Q6ENT9</accession>